<dbReference type="EC" id="2.7.2.1" evidence="1"/>
<dbReference type="EMBL" id="CP001146">
    <property type="protein sequence ID" value="ACI18400.1"/>
    <property type="molecule type" value="Genomic_DNA"/>
</dbReference>
<dbReference type="RefSeq" id="WP_012547032.1">
    <property type="nucleotide sequence ID" value="NC_011297.1"/>
</dbReference>
<dbReference type="SMR" id="B5YDP7"/>
<dbReference type="STRING" id="309799.DICTH_0789"/>
<dbReference type="PaxDb" id="309799-DICTH_0789"/>
<dbReference type="KEGG" id="dth:DICTH_0789"/>
<dbReference type="eggNOG" id="COG0282">
    <property type="taxonomic scope" value="Bacteria"/>
</dbReference>
<dbReference type="HOGENOM" id="CLU_020352_0_1_0"/>
<dbReference type="OrthoDB" id="9802453at2"/>
<dbReference type="UniPathway" id="UPA00340">
    <property type="reaction ID" value="UER00458"/>
</dbReference>
<dbReference type="Proteomes" id="UP000001733">
    <property type="component" value="Chromosome"/>
</dbReference>
<dbReference type="GO" id="GO:0005737">
    <property type="term" value="C:cytoplasm"/>
    <property type="evidence" value="ECO:0007669"/>
    <property type="project" value="UniProtKB-SubCell"/>
</dbReference>
<dbReference type="GO" id="GO:0008776">
    <property type="term" value="F:acetate kinase activity"/>
    <property type="evidence" value="ECO:0007669"/>
    <property type="project" value="UniProtKB-UniRule"/>
</dbReference>
<dbReference type="GO" id="GO:0005524">
    <property type="term" value="F:ATP binding"/>
    <property type="evidence" value="ECO:0007669"/>
    <property type="project" value="UniProtKB-KW"/>
</dbReference>
<dbReference type="GO" id="GO:0000287">
    <property type="term" value="F:magnesium ion binding"/>
    <property type="evidence" value="ECO:0007669"/>
    <property type="project" value="UniProtKB-UniRule"/>
</dbReference>
<dbReference type="GO" id="GO:0006083">
    <property type="term" value="P:acetate metabolic process"/>
    <property type="evidence" value="ECO:0007669"/>
    <property type="project" value="TreeGrafter"/>
</dbReference>
<dbReference type="GO" id="GO:0006085">
    <property type="term" value="P:acetyl-CoA biosynthetic process"/>
    <property type="evidence" value="ECO:0007669"/>
    <property type="project" value="UniProtKB-UniRule"/>
</dbReference>
<dbReference type="CDD" id="cd24010">
    <property type="entry name" value="ASKHA_NBD_AcK_PK"/>
    <property type="match status" value="1"/>
</dbReference>
<dbReference type="Gene3D" id="3.30.420.40">
    <property type="match status" value="2"/>
</dbReference>
<dbReference type="HAMAP" id="MF_00020">
    <property type="entry name" value="Acetate_kinase"/>
    <property type="match status" value="1"/>
</dbReference>
<dbReference type="InterPro" id="IPR004372">
    <property type="entry name" value="Ac/propionate_kinase"/>
</dbReference>
<dbReference type="InterPro" id="IPR000890">
    <property type="entry name" value="Aliphatic_acid_kin_short-chain"/>
</dbReference>
<dbReference type="InterPro" id="IPR023865">
    <property type="entry name" value="Aliphatic_acid_kinase_CS"/>
</dbReference>
<dbReference type="InterPro" id="IPR043129">
    <property type="entry name" value="ATPase_NBD"/>
</dbReference>
<dbReference type="NCBIfam" id="TIGR00016">
    <property type="entry name" value="ackA"/>
    <property type="match status" value="1"/>
</dbReference>
<dbReference type="PANTHER" id="PTHR21060">
    <property type="entry name" value="ACETATE KINASE"/>
    <property type="match status" value="1"/>
</dbReference>
<dbReference type="PANTHER" id="PTHR21060:SF15">
    <property type="entry name" value="ACETATE KINASE-RELATED"/>
    <property type="match status" value="1"/>
</dbReference>
<dbReference type="Pfam" id="PF00871">
    <property type="entry name" value="Acetate_kinase"/>
    <property type="match status" value="1"/>
</dbReference>
<dbReference type="PIRSF" id="PIRSF000722">
    <property type="entry name" value="Acetate_prop_kin"/>
    <property type="match status" value="1"/>
</dbReference>
<dbReference type="PRINTS" id="PR00471">
    <property type="entry name" value="ACETATEKNASE"/>
</dbReference>
<dbReference type="SUPFAM" id="SSF53067">
    <property type="entry name" value="Actin-like ATPase domain"/>
    <property type="match status" value="2"/>
</dbReference>
<dbReference type="PROSITE" id="PS01075">
    <property type="entry name" value="ACETATE_KINASE_1"/>
    <property type="match status" value="1"/>
</dbReference>
<dbReference type="PROSITE" id="PS01076">
    <property type="entry name" value="ACETATE_KINASE_2"/>
    <property type="match status" value="1"/>
</dbReference>
<reference key="1">
    <citation type="journal article" date="2014" name="Genome Announc.">
        <title>Complete Genome Sequence of the Extreme Thermophile Dictyoglomus thermophilum H-6-12.</title>
        <authorList>
            <person name="Coil D.A."/>
            <person name="Badger J.H."/>
            <person name="Forberger H.C."/>
            <person name="Riggs F."/>
            <person name="Madupu R."/>
            <person name="Fedorova N."/>
            <person name="Ward N."/>
            <person name="Robb F.T."/>
            <person name="Eisen J.A."/>
        </authorList>
    </citation>
    <scope>NUCLEOTIDE SEQUENCE [LARGE SCALE GENOMIC DNA]</scope>
    <source>
        <strain>ATCC 35947 / DSM 3960 / H-6-12</strain>
    </source>
</reference>
<comment type="function">
    <text evidence="1">Catalyzes the formation of acetyl phosphate from acetate and ATP. Can also catalyze the reverse reaction.</text>
</comment>
<comment type="catalytic activity">
    <reaction evidence="1">
        <text>acetate + ATP = acetyl phosphate + ADP</text>
        <dbReference type="Rhea" id="RHEA:11352"/>
        <dbReference type="ChEBI" id="CHEBI:22191"/>
        <dbReference type="ChEBI" id="CHEBI:30089"/>
        <dbReference type="ChEBI" id="CHEBI:30616"/>
        <dbReference type="ChEBI" id="CHEBI:456216"/>
        <dbReference type="EC" id="2.7.2.1"/>
    </reaction>
</comment>
<comment type="cofactor">
    <cofactor evidence="1">
        <name>Mg(2+)</name>
        <dbReference type="ChEBI" id="CHEBI:18420"/>
    </cofactor>
    <cofactor evidence="1">
        <name>Mn(2+)</name>
        <dbReference type="ChEBI" id="CHEBI:29035"/>
    </cofactor>
    <text evidence="1">Mg(2+). Can also accept Mn(2+).</text>
</comment>
<comment type="pathway">
    <text evidence="1">Metabolic intermediate biosynthesis; acetyl-CoA biosynthesis; acetyl-CoA from acetate: step 1/2.</text>
</comment>
<comment type="subunit">
    <text evidence="1">Homodimer.</text>
</comment>
<comment type="subcellular location">
    <subcellularLocation>
        <location evidence="1">Cytoplasm</location>
    </subcellularLocation>
</comment>
<comment type="similarity">
    <text evidence="1">Belongs to the acetokinase family.</text>
</comment>
<name>ACKA_DICT6</name>
<evidence type="ECO:0000255" key="1">
    <source>
        <dbReference type="HAMAP-Rule" id="MF_00020"/>
    </source>
</evidence>
<feature type="chain" id="PRO_1000089971" description="Acetate kinase">
    <location>
        <begin position="1"/>
        <end position="399"/>
    </location>
</feature>
<feature type="active site" description="Proton donor/acceptor" evidence="1">
    <location>
        <position position="148"/>
    </location>
</feature>
<feature type="binding site" evidence="1">
    <location>
        <position position="7"/>
    </location>
    <ligand>
        <name>Mg(2+)</name>
        <dbReference type="ChEBI" id="CHEBI:18420"/>
    </ligand>
</feature>
<feature type="binding site" evidence="1">
    <location>
        <position position="14"/>
    </location>
    <ligand>
        <name>ATP</name>
        <dbReference type="ChEBI" id="CHEBI:30616"/>
    </ligand>
</feature>
<feature type="binding site" evidence="1">
    <location>
        <position position="91"/>
    </location>
    <ligand>
        <name>substrate</name>
    </ligand>
</feature>
<feature type="binding site" evidence="1">
    <location>
        <begin position="208"/>
        <end position="212"/>
    </location>
    <ligand>
        <name>ATP</name>
        <dbReference type="ChEBI" id="CHEBI:30616"/>
    </ligand>
</feature>
<feature type="binding site" evidence="1">
    <location>
        <begin position="283"/>
        <end position="285"/>
    </location>
    <ligand>
        <name>ATP</name>
        <dbReference type="ChEBI" id="CHEBI:30616"/>
    </ligand>
</feature>
<feature type="binding site" evidence="1">
    <location>
        <position position="384"/>
    </location>
    <ligand>
        <name>Mg(2+)</name>
        <dbReference type="ChEBI" id="CHEBI:18420"/>
    </ligand>
</feature>
<feature type="site" description="Transition state stabilizer" evidence="1">
    <location>
        <position position="180"/>
    </location>
</feature>
<feature type="site" description="Transition state stabilizer" evidence="1">
    <location>
        <position position="241"/>
    </location>
</feature>
<organism>
    <name type="scientific">Dictyoglomus thermophilum (strain ATCC 35947 / DSM 3960 / H-6-12)</name>
    <dbReference type="NCBI Taxonomy" id="309799"/>
    <lineage>
        <taxon>Bacteria</taxon>
        <taxon>Pseudomonadati</taxon>
        <taxon>Dictyoglomota</taxon>
        <taxon>Dictyoglomia</taxon>
        <taxon>Dictyoglomales</taxon>
        <taxon>Dictyoglomaceae</taxon>
        <taxon>Dictyoglomus</taxon>
    </lineage>
</organism>
<proteinExistence type="inferred from homology"/>
<gene>
    <name evidence="1" type="primary">ackA</name>
    <name type="ordered locus">DICTH_0789</name>
</gene>
<keyword id="KW-0067">ATP-binding</keyword>
<keyword id="KW-0963">Cytoplasm</keyword>
<keyword id="KW-0418">Kinase</keyword>
<keyword id="KW-0460">Magnesium</keyword>
<keyword id="KW-0479">Metal-binding</keyword>
<keyword id="KW-0547">Nucleotide-binding</keyword>
<keyword id="KW-0808">Transferase</keyword>
<sequence length="399" mass="44258">MKVLVLNCGSSSVKYQVFDMKDEKVLAKGLAERIGLDGSRIVYQRGVESKKVFEIPLPTHKKAIEEIFRLLVDKNDGILSSLNEIDAVGHRVVHGGDKFIESVLVNDEVYNTFKGILDLAPLHNPYNLQGVDACLELMPGVPQVLVFDTSFHQTMPEEAYIYALPYEWYEKYKIRRYGFHGTSHYYVSRRVAELIGRPVEELKIISCHLGNGASITAIKNGKSIDTSMGYTPLEGLVMGTRCGDIDPAIPILLMEKENLSPKQIDEILNKKSGILGISGVSSDFRDVGEAAEKGNKRAELALKVFAYRVKKYIGAYHAILGGLDVLVFTAGVGERGPLERSLICSGLEHLGIKLDPEKNKVKGEELKISTPDSKVEVWVIPTNEELMIARETVRVVGKK</sequence>
<accession>B5YDP7</accession>
<protein>
    <recommendedName>
        <fullName evidence="1">Acetate kinase</fullName>
        <ecNumber evidence="1">2.7.2.1</ecNumber>
    </recommendedName>
    <alternativeName>
        <fullName evidence="1">Acetokinase</fullName>
    </alternativeName>
</protein>